<keyword id="KW-0328">Glycosyltransferase</keyword>
<keyword id="KW-0808">Transferase</keyword>
<feature type="chain" id="PRO_0000074143" description="Anthocyanidin 3-O-glucosyltransferase 1">
    <location>
        <begin position="1"/>
        <end position="449"/>
    </location>
</feature>
<feature type="active site" description="Proton acceptor" evidence="2">
    <location>
        <position position="3"/>
    </location>
</feature>
<feature type="active site" description="Charge relay" evidence="2">
    <location>
        <position position="103"/>
    </location>
</feature>
<feature type="binding site" evidence="3">
    <location>
        <position position="3"/>
    </location>
    <ligand>
        <name>an anthocyanidin</name>
        <dbReference type="ChEBI" id="CHEBI:143576"/>
    </ligand>
</feature>
<feature type="binding site" evidence="2">
    <location>
        <position position="125"/>
    </location>
    <ligand>
        <name>UDP-alpha-D-glucose</name>
        <dbReference type="ChEBI" id="CHEBI:58885"/>
    </ligand>
</feature>
<feature type="binding site" evidence="2">
    <location>
        <position position="325"/>
    </location>
    <ligand>
        <name>UDP-alpha-D-glucose</name>
        <dbReference type="ChEBI" id="CHEBI:58885"/>
    </ligand>
</feature>
<feature type="binding site" evidence="2">
    <location>
        <position position="327"/>
    </location>
    <ligand>
        <name>UDP-alpha-D-glucose</name>
        <dbReference type="ChEBI" id="CHEBI:58885"/>
    </ligand>
</feature>
<feature type="binding site" evidence="2">
    <location>
        <position position="342"/>
    </location>
    <ligand>
        <name>UDP-alpha-D-glucose</name>
        <dbReference type="ChEBI" id="CHEBI:58885"/>
    </ligand>
</feature>
<feature type="binding site" evidence="2">
    <location>
        <position position="345"/>
    </location>
    <ligand>
        <name>UDP-alpha-D-glucose</name>
        <dbReference type="ChEBI" id="CHEBI:58885"/>
    </ligand>
</feature>
<feature type="binding site" evidence="2">
    <location>
        <position position="346"/>
    </location>
    <ligand>
        <name>UDP-alpha-D-glucose</name>
        <dbReference type="ChEBI" id="CHEBI:58885"/>
    </ligand>
</feature>
<feature type="binding site" evidence="2">
    <location>
        <position position="347"/>
    </location>
    <ligand>
        <name>UDP-alpha-D-glucose</name>
        <dbReference type="ChEBI" id="CHEBI:58885"/>
    </ligand>
</feature>
<feature type="binding site" evidence="2">
    <location>
        <position position="350"/>
    </location>
    <ligand>
        <name>UDP-alpha-D-glucose</name>
        <dbReference type="ChEBI" id="CHEBI:58885"/>
    </ligand>
</feature>
<feature type="binding site" evidence="3">
    <location>
        <position position="365"/>
    </location>
    <ligand>
        <name>an anthocyanidin</name>
        <dbReference type="ChEBI" id="CHEBI:143576"/>
    </ligand>
</feature>
<feature type="binding site" evidence="2">
    <location>
        <position position="366"/>
    </location>
    <ligand>
        <name>UDP-alpha-D-glucose</name>
        <dbReference type="ChEBI" id="CHEBI:58885"/>
    </ligand>
</feature>
<feature type="binding site" evidence="2">
    <location>
        <position position="367"/>
    </location>
    <ligand>
        <name>UDP-alpha-D-glucose</name>
        <dbReference type="ChEBI" id="CHEBI:58885"/>
    </ligand>
</feature>
<gene>
    <name type="primary">GT1</name>
    <name type="synonym">UGT73A1</name>
</gene>
<reference key="1">
    <citation type="journal article" date="1994" name="DNA Seq.">
        <title>Multiple secondary plant product UDP-glucose glucosyltransferase genes expressed in cassava (Manihot esculenta Crantz) cotyledons.</title>
        <authorList>
            <person name="Hughes J."/>
            <person name="Hughes M.A."/>
        </authorList>
    </citation>
    <scope>NUCLEOTIDE SEQUENCE [MRNA]</scope>
    <source>
        <tissue>Cotyledon</tissue>
    </source>
</reference>
<proteinExistence type="evidence at transcript level"/>
<name>UFOG1_MANES</name>
<accession>Q40284</accession>
<dbReference type="EC" id="2.4.1.115"/>
<dbReference type="EMBL" id="X77459">
    <property type="protein sequence ID" value="CAA54609.1"/>
    <property type="molecule type" value="mRNA"/>
</dbReference>
<dbReference type="PIR" id="S41950">
    <property type="entry name" value="S41950"/>
</dbReference>
<dbReference type="SMR" id="Q40284"/>
<dbReference type="CAZy" id="GT1">
    <property type="family name" value="Glycosyltransferase Family 1"/>
</dbReference>
<dbReference type="UniPathway" id="UPA00009"/>
<dbReference type="GO" id="GO:0047213">
    <property type="term" value="F:anthocyanidin 3-O-glucosyltransferase activity"/>
    <property type="evidence" value="ECO:0007669"/>
    <property type="project" value="UniProtKB-EC"/>
</dbReference>
<dbReference type="GO" id="GO:0009718">
    <property type="term" value="P:anthocyanin-containing compound biosynthetic process"/>
    <property type="evidence" value="ECO:0007669"/>
    <property type="project" value="UniProtKB-UniPathway"/>
</dbReference>
<dbReference type="CDD" id="cd03784">
    <property type="entry name" value="GT1_Gtf-like"/>
    <property type="match status" value="1"/>
</dbReference>
<dbReference type="FunFam" id="3.40.50.2000:FF:000056">
    <property type="entry name" value="Glycosyltransferase"/>
    <property type="match status" value="1"/>
</dbReference>
<dbReference type="Gene3D" id="3.40.50.2000">
    <property type="entry name" value="Glycogen Phosphorylase B"/>
    <property type="match status" value="2"/>
</dbReference>
<dbReference type="InterPro" id="IPR050481">
    <property type="entry name" value="UDP-glycosyltransf_plant"/>
</dbReference>
<dbReference type="InterPro" id="IPR002213">
    <property type="entry name" value="UDP_glucos_trans"/>
</dbReference>
<dbReference type="InterPro" id="IPR035595">
    <property type="entry name" value="UDP_glycos_trans_CS"/>
</dbReference>
<dbReference type="PANTHER" id="PTHR48048">
    <property type="entry name" value="GLYCOSYLTRANSFERASE"/>
    <property type="match status" value="1"/>
</dbReference>
<dbReference type="PANTHER" id="PTHR48048:SF45">
    <property type="entry name" value="GLYCOSYLTRANSFERASE"/>
    <property type="match status" value="1"/>
</dbReference>
<dbReference type="Pfam" id="PF00201">
    <property type="entry name" value="UDPGT"/>
    <property type="match status" value="1"/>
</dbReference>
<dbReference type="SUPFAM" id="SSF53756">
    <property type="entry name" value="UDP-Glycosyltransferase/glycogen phosphorylase"/>
    <property type="match status" value="1"/>
</dbReference>
<dbReference type="PROSITE" id="PS00375">
    <property type="entry name" value="UDPGT"/>
    <property type="match status" value="1"/>
</dbReference>
<protein>
    <recommendedName>
        <fullName>Anthocyanidin 3-O-glucosyltransferase 1</fullName>
        <ecNumber>2.4.1.115</ecNumber>
    </recommendedName>
    <alternativeName>
        <fullName>Flavonol 3-O-glucosyltransferase 1</fullName>
    </alternativeName>
    <alternativeName>
        <fullName>UDP-glucose flavonoid 3-O-glucosyltransferase 1</fullName>
    </alternativeName>
</protein>
<evidence type="ECO:0000250" key="1"/>
<evidence type="ECO:0000250" key="2">
    <source>
        <dbReference type="UniProtKB" id="A0A0A1HA03"/>
    </source>
</evidence>
<evidence type="ECO:0000250" key="3">
    <source>
        <dbReference type="UniProtKB" id="P51094"/>
    </source>
</evidence>
<evidence type="ECO:0000305" key="4"/>
<organism>
    <name type="scientific">Manihot esculenta</name>
    <name type="common">Cassava</name>
    <name type="synonym">Jatropha manihot</name>
    <dbReference type="NCBI Taxonomy" id="3983"/>
    <lineage>
        <taxon>Eukaryota</taxon>
        <taxon>Viridiplantae</taxon>
        <taxon>Streptophyta</taxon>
        <taxon>Embryophyta</taxon>
        <taxon>Tracheophyta</taxon>
        <taxon>Spermatophyta</taxon>
        <taxon>Magnoliopsida</taxon>
        <taxon>eudicotyledons</taxon>
        <taxon>Gunneridae</taxon>
        <taxon>Pentapetalae</taxon>
        <taxon>rosids</taxon>
        <taxon>fabids</taxon>
        <taxon>Malpighiales</taxon>
        <taxon>Euphorbiaceae</taxon>
        <taxon>Crotonoideae</taxon>
        <taxon>Manihoteae</taxon>
        <taxon>Manihot</taxon>
    </lineage>
</organism>
<comment type="function">
    <text evidence="1">In the presence of other necessary color factors, this glycosylation reaction allows the accumulation of anthocyanin pigments.</text>
</comment>
<comment type="catalytic activity">
    <reaction>
        <text>an anthocyanidin + UDP-alpha-D-glucose + H(+) = an anthocyanidin 3-O-beta-D-glucoside + UDP</text>
        <dbReference type="Rhea" id="RHEA:20093"/>
        <dbReference type="ChEBI" id="CHEBI:15378"/>
        <dbReference type="ChEBI" id="CHEBI:16307"/>
        <dbReference type="ChEBI" id="CHEBI:58223"/>
        <dbReference type="ChEBI" id="CHEBI:58885"/>
        <dbReference type="ChEBI" id="CHEBI:143576"/>
        <dbReference type="EC" id="2.4.1.115"/>
    </reaction>
</comment>
<comment type="pathway">
    <text>Pigment biosynthesis; anthocyanin biosynthesis.</text>
</comment>
<comment type="tissue specificity">
    <text>Expressed in cotyledons and roots, but not in leaves.</text>
</comment>
<comment type="developmental stage">
    <text>Maximum expression in cotyledons that just emerged from the seed coat. Low levels in hypocotyls and increasing levels in roots throughout this period of development.</text>
</comment>
<comment type="similarity">
    <text evidence="4">Belongs to the UDP-glycosyltransferase family.</text>
</comment>
<sequence length="449" mass="50282">MGHLVSAVETAKLLLSRCHSLSITVLIFNNSVVTSKVHNYVDSQIASSSNRLRFIYLPRDETGISSFSSLIEKQKPHVKESVMKITEFGSSVESPRLVGFIVDMFCTAMIDVANEFGVPSYIFYTSGAAFLNFMLHVQKIHDEENFNPTEFNASDGELQVPGLVNSFPSKAMPTAILSKQWFPPLLENTRRYGEAKGVIINTFFELESHAIESFKDPPIYPVGPILDVRSNGRNTNQEIMQWLDDQPPSSVVFLCFGSNGSFSKDQVKEIACALEDSGHRFLWSLADHRAPGFLESPSDYEDLQEVLPEGFLERTSGIEKVIGWAPQVAVLAHPATGGLVSHSGWNSILESIWFGVPVATWPMYAEQQFNAFQMVIELGLAVEIKMDYRNDSGEIVKCDQIERGIRCLMKHDSDRRKKVKEMSEKSRGALMEGGSSYCWLDNLIKDMIK</sequence>